<feature type="chain" id="PRO_1000088604" description="Tyrosine--tRNA ligase">
    <location>
        <begin position="1"/>
        <end position="431"/>
    </location>
</feature>
<feature type="domain" description="S4 RNA-binding" evidence="1">
    <location>
        <begin position="353"/>
        <end position="422"/>
    </location>
</feature>
<feature type="short sequence motif" description="'HIGH' region">
    <location>
        <begin position="39"/>
        <end position="48"/>
    </location>
</feature>
<feature type="short sequence motif" description="'KMSKS' region">
    <location>
        <begin position="231"/>
        <end position="235"/>
    </location>
</feature>
<feature type="binding site" evidence="1">
    <location>
        <position position="34"/>
    </location>
    <ligand>
        <name>L-tyrosine</name>
        <dbReference type="ChEBI" id="CHEBI:58315"/>
    </ligand>
</feature>
<feature type="binding site" evidence="1">
    <location>
        <position position="171"/>
    </location>
    <ligand>
        <name>L-tyrosine</name>
        <dbReference type="ChEBI" id="CHEBI:58315"/>
    </ligand>
</feature>
<feature type="binding site" evidence="1">
    <location>
        <position position="175"/>
    </location>
    <ligand>
        <name>L-tyrosine</name>
        <dbReference type="ChEBI" id="CHEBI:58315"/>
    </ligand>
</feature>
<feature type="binding site" evidence="1">
    <location>
        <position position="234"/>
    </location>
    <ligand>
        <name>ATP</name>
        <dbReference type="ChEBI" id="CHEBI:30616"/>
    </ligand>
</feature>
<evidence type="ECO:0000255" key="1">
    <source>
        <dbReference type="HAMAP-Rule" id="MF_02006"/>
    </source>
</evidence>
<protein>
    <recommendedName>
        <fullName evidence="1">Tyrosine--tRNA ligase</fullName>
        <ecNumber evidence="1">6.1.1.1</ecNumber>
    </recommendedName>
    <alternativeName>
        <fullName evidence="1">Tyrosyl-tRNA synthetase</fullName>
        <shortName evidence="1">TyrRS</shortName>
    </alternativeName>
</protein>
<gene>
    <name evidence="1" type="primary">tyrS</name>
    <name type="ordered locus">NMCC_0387</name>
</gene>
<proteinExistence type="inferred from homology"/>
<accession>A9M1J5</accession>
<name>SYY_NEIM0</name>
<reference key="1">
    <citation type="journal article" date="2008" name="Genomics">
        <title>Characterization of ST-4821 complex, a unique Neisseria meningitidis clone.</title>
        <authorList>
            <person name="Peng J."/>
            <person name="Yang L."/>
            <person name="Yang F."/>
            <person name="Yang J."/>
            <person name="Yan Y."/>
            <person name="Nie H."/>
            <person name="Zhang X."/>
            <person name="Xiong Z."/>
            <person name="Jiang Y."/>
            <person name="Cheng F."/>
            <person name="Xu X."/>
            <person name="Chen S."/>
            <person name="Sun L."/>
            <person name="Li W."/>
            <person name="Shen Y."/>
            <person name="Shao Z."/>
            <person name="Liang X."/>
            <person name="Xu J."/>
            <person name="Jin Q."/>
        </authorList>
    </citation>
    <scope>NUCLEOTIDE SEQUENCE [LARGE SCALE GENOMIC DNA]</scope>
    <source>
        <strain>053442</strain>
    </source>
</reference>
<comment type="function">
    <text evidence="1">Catalyzes the attachment of tyrosine to tRNA(Tyr) in a two-step reaction: tyrosine is first activated by ATP to form Tyr-AMP and then transferred to the acceptor end of tRNA(Tyr).</text>
</comment>
<comment type="catalytic activity">
    <reaction evidence="1">
        <text>tRNA(Tyr) + L-tyrosine + ATP = L-tyrosyl-tRNA(Tyr) + AMP + diphosphate + H(+)</text>
        <dbReference type="Rhea" id="RHEA:10220"/>
        <dbReference type="Rhea" id="RHEA-COMP:9706"/>
        <dbReference type="Rhea" id="RHEA-COMP:9707"/>
        <dbReference type="ChEBI" id="CHEBI:15378"/>
        <dbReference type="ChEBI" id="CHEBI:30616"/>
        <dbReference type="ChEBI" id="CHEBI:33019"/>
        <dbReference type="ChEBI" id="CHEBI:58315"/>
        <dbReference type="ChEBI" id="CHEBI:78442"/>
        <dbReference type="ChEBI" id="CHEBI:78536"/>
        <dbReference type="ChEBI" id="CHEBI:456215"/>
        <dbReference type="EC" id="6.1.1.1"/>
    </reaction>
</comment>
<comment type="subunit">
    <text evidence="1">Homodimer.</text>
</comment>
<comment type="subcellular location">
    <subcellularLocation>
        <location evidence="1">Cytoplasm</location>
    </subcellularLocation>
</comment>
<comment type="similarity">
    <text evidence="1">Belongs to the class-I aminoacyl-tRNA synthetase family. TyrS type 1 subfamily.</text>
</comment>
<sequence length="431" mass="47387">MSVIQDLQSRDLIAQTTDIEALDALLNEQKIALYCGFDPTADSLHIGHLLPVLALRRFQQAGHTPIALVGGATGMIGDPSFKAAERSLNSAETVAGWVESIRNQLTPFLSFEGGNAAIMANNADWFGKMNCLDFLRDIGKHFSVNAMLNKESVKQRIDRDGAGISFTEFAYSLLQGYDFAELNKRYGAVLEIGGSDQWGNITAGIDLTRRLNQKQVFGLTLPLVTKSDGTKFGKTEGGAVWLNAKKTSPYQFYQFWLKVADADVYKFLKYFTFLSIEEIDAVEAKDQASGSKPEAQRILAEEMTRLIHGEEALAAAQRISESLFAEDQSSLTESDFEQLALDGLPAFEVSDGINVVEALVKTGLASSNKEARGFVNSKAVLLNGKPAEANNPNHAAERPDDACLLTDEHKRFGKYTILRRGKRNHALLVWK</sequence>
<keyword id="KW-0030">Aminoacyl-tRNA synthetase</keyword>
<keyword id="KW-0067">ATP-binding</keyword>
<keyword id="KW-0963">Cytoplasm</keyword>
<keyword id="KW-0436">Ligase</keyword>
<keyword id="KW-0547">Nucleotide-binding</keyword>
<keyword id="KW-0648">Protein biosynthesis</keyword>
<keyword id="KW-0694">RNA-binding</keyword>
<organism>
    <name type="scientific">Neisseria meningitidis serogroup C (strain 053442)</name>
    <dbReference type="NCBI Taxonomy" id="374833"/>
    <lineage>
        <taxon>Bacteria</taxon>
        <taxon>Pseudomonadati</taxon>
        <taxon>Pseudomonadota</taxon>
        <taxon>Betaproteobacteria</taxon>
        <taxon>Neisseriales</taxon>
        <taxon>Neisseriaceae</taxon>
        <taxon>Neisseria</taxon>
    </lineage>
</organism>
<dbReference type="EC" id="6.1.1.1" evidence="1"/>
<dbReference type="EMBL" id="CP000381">
    <property type="protein sequence ID" value="ABX72593.1"/>
    <property type="molecule type" value="Genomic_DNA"/>
</dbReference>
<dbReference type="RefSeq" id="WP_012221289.1">
    <property type="nucleotide sequence ID" value="NC_010120.1"/>
</dbReference>
<dbReference type="SMR" id="A9M1J5"/>
<dbReference type="KEGG" id="nmn:NMCC_0387"/>
<dbReference type="HOGENOM" id="CLU_024003_0_3_4"/>
<dbReference type="Proteomes" id="UP000001177">
    <property type="component" value="Chromosome"/>
</dbReference>
<dbReference type="GO" id="GO:0005829">
    <property type="term" value="C:cytosol"/>
    <property type="evidence" value="ECO:0007669"/>
    <property type="project" value="TreeGrafter"/>
</dbReference>
<dbReference type="GO" id="GO:0005524">
    <property type="term" value="F:ATP binding"/>
    <property type="evidence" value="ECO:0007669"/>
    <property type="project" value="UniProtKB-UniRule"/>
</dbReference>
<dbReference type="GO" id="GO:0003723">
    <property type="term" value="F:RNA binding"/>
    <property type="evidence" value="ECO:0007669"/>
    <property type="project" value="UniProtKB-KW"/>
</dbReference>
<dbReference type="GO" id="GO:0004831">
    <property type="term" value="F:tyrosine-tRNA ligase activity"/>
    <property type="evidence" value="ECO:0007669"/>
    <property type="project" value="UniProtKB-UniRule"/>
</dbReference>
<dbReference type="GO" id="GO:0006437">
    <property type="term" value="P:tyrosyl-tRNA aminoacylation"/>
    <property type="evidence" value="ECO:0007669"/>
    <property type="project" value="UniProtKB-UniRule"/>
</dbReference>
<dbReference type="CDD" id="cd00805">
    <property type="entry name" value="TyrRS_core"/>
    <property type="match status" value="1"/>
</dbReference>
<dbReference type="FunFam" id="1.10.240.10:FF:000001">
    <property type="entry name" value="Tyrosine--tRNA ligase"/>
    <property type="match status" value="1"/>
</dbReference>
<dbReference type="FunFam" id="3.10.290.10:FF:000027">
    <property type="entry name" value="Tyrosine--tRNA ligase"/>
    <property type="match status" value="1"/>
</dbReference>
<dbReference type="FunFam" id="3.40.50.620:FF:000008">
    <property type="entry name" value="Tyrosine--tRNA ligase"/>
    <property type="match status" value="1"/>
</dbReference>
<dbReference type="Gene3D" id="3.40.50.620">
    <property type="entry name" value="HUPs"/>
    <property type="match status" value="1"/>
</dbReference>
<dbReference type="Gene3D" id="3.10.290.10">
    <property type="entry name" value="RNA-binding S4 domain"/>
    <property type="match status" value="1"/>
</dbReference>
<dbReference type="Gene3D" id="1.10.240.10">
    <property type="entry name" value="Tyrosyl-Transfer RNA Synthetase"/>
    <property type="match status" value="1"/>
</dbReference>
<dbReference type="HAMAP" id="MF_02006">
    <property type="entry name" value="Tyr_tRNA_synth_type1"/>
    <property type="match status" value="1"/>
</dbReference>
<dbReference type="InterPro" id="IPR001412">
    <property type="entry name" value="aa-tRNA-synth_I_CS"/>
</dbReference>
<dbReference type="InterPro" id="IPR002305">
    <property type="entry name" value="aa-tRNA-synth_Ic"/>
</dbReference>
<dbReference type="InterPro" id="IPR014729">
    <property type="entry name" value="Rossmann-like_a/b/a_fold"/>
</dbReference>
<dbReference type="InterPro" id="IPR036986">
    <property type="entry name" value="S4_RNA-bd_sf"/>
</dbReference>
<dbReference type="InterPro" id="IPR054608">
    <property type="entry name" value="SYY-like_C"/>
</dbReference>
<dbReference type="InterPro" id="IPR002307">
    <property type="entry name" value="Tyr-tRNA-ligase"/>
</dbReference>
<dbReference type="InterPro" id="IPR024088">
    <property type="entry name" value="Tyr-tRNA-ligase_bac-type"/>
</dbReference>
<dbReference type="InterPro" id="IPR024107">
    <property type="entry name" value="Tyr-tRNA-ligase_bac_1"/>
</dbReference>
<dbReference type="NCBIfam" id="TIGR00234">
    <property type="entry name" value="tyrS"/>
    <property type="match status" value="1"/>
</dbReference>
<dbReference type="PANTHER" id="PTHR11766:SF0">
    <property type="entry name" value="TYROSINE--TRNA LIGASE, MITOCHONDRIAL"/>
    <property type="match status" value="1"/>
</dbReference>
<dbReference type="PANTHER" id="PTHR11766">
    <property type="entry name" value="TYROSYL-TRNA SYNTHETASE"/>
    <property type="match status" value="1"/>
</dbReference>
<dbReference type="Pfam" id="PF22421">
    <property type="entry name" value="SYY_C-terminal"/>
    <property type="match status" value="1"/>
</dbReference>
<dbReference type="Pfam" id="PF00579">
    <property type="entry name" value="tRNA-synt_1b"/>
    <property type="match status" value="1"/>
</dbReference>
<dbReference type="PRINTS" id="PR01040">
    <property type="entry name" value="TRNASYNTHTYR"/>
</dbReference>
<dbReference type="SUPFAM" id="SSF55174">
    <property type="entry name" value="Alpha-L RNA-binding motif"/>
    <property type="match status" value="1"/>
</dbReference>
<dbReference type="SUPFAM" id="SSF52374">
    <property type="entry name" value="Nucleotidylyl transferase"/>
    <property type="match status" value="1"/>
</dbReference>
<dbReference type="PROSITE" id="PS00178">
    <property type="entry name" value="AA_TRNA_LIGASE_I"/>
    <property type="match status" value="1"/>
</dbReference>
<dbReference type="PROSITE" id="PS50889">
    <property type="entry name" value="S4"/>
    <property type="match status" value="1"/>
</dbReference>